<comment type="function">
    <text evidence="1">Catalyzes the conversion of dihydroorotate to orotate with quinone as electron acceptor.</text>
</comment>
<comment type="catalytic activity">
    <reaction evidence="1">
        <text>(S)-dihydroorotate + a quinone = orotate + a quinol</text>
        <dbReference type="Rhea" id="RHEA:30187"/>
        <dbReference type="ChEBI" id="CHEBI:24646"/>
        <dbReference type="ChEBI" id="CHEBI:30839"/>
        <dbReference type="ChEBI" id="CHEBI:30864"/>
        <dbReference type="ChEBI" id="CHEBI:132124"/>
        <dbReference type="EC" id="1.3.5.2"/>
    </reaction>
</comment>
<comment type="cofactor">
    <cofactor evidence="1">
        <name>FMN</name>
        <dbReference type="ChEBI" id="CHEBI:58210"/>
    </cofactor>
    <text evidence="1">Binds 1 FMN per subunit.</text>
</comment>
<comment type="pathway">
    <text evidence="1">Pyrimidine metabolism; UMP biosynthesis via de novo pathway; orotate from (S)-dihydroorotate (quinone route): step 1/1.</text>
</comment>
<comment type="subunit">
    <text evidence="1">Monomer.</text>
</comment>
<comment type="subcellular location">
    <subcellularLocation>
        <location evidence="1">Cell membrane</location>
        <topology evidence="1">Peripheral membrane protein</topology>
    </subcellularLocation>
</comment>
<comment type="similarity">
    <text evidence="1">Belongs to the dihydroorotate dehydrogenase family. Type 2 subfamily.</text>
</comment>
<feature type="chain" id="PRO_0000148425" description="Dihydroorotate dehydrogenase (quinone)">
    <location>
        <begin position="1"/>
        <end position="349"/>
    </location>
</feature>
<feature type="active site" description="Nucleophile" evidence="1">
    <location>
        <position position="183"/>
    </location>
</feature>
<feature type="binding site" evidence="1">
    <location>
        <begin position="67"/>
        <end position="71"/>
    </location>
    <ligand>
        <name>FMN</name>
        <dbReference type="ChEBI" id="CHEBI:58210"/>
    </ligand>
</feature>
<feature type="binding site" evidence="1">
    <location>
        <position position="71"/>
    </location>
    <ligand>
        <name>substrate</name>
    </ligand>
</feature>
<feature type="binding site" evidence="1">
    <location>
        <position position="91"/>
    </location>
    <ligand>
        <name>FMN</name>
        <dbReference type="ChEBI" id="CHEBI:58210"/>
    </ligand>
</feature>
<feature type="binding site" evidence="1">
    <location>
        <begin position="116"/>
        <end position="120"/>
    </location>
    <ligand>
        <name>substrate</name>
    </ligand>
</feature>
<feature type="binding site" evidence="1">
    <location>
        <position position="147"/>
    </location>
    <ligand>
        <name>FMN</name>
        <dbReference type="ChEBI" id="CHEBI:58210"/>
    </ligand>
</feature>
<feature type="binding site" evidence="1">
    <location>
        <position position="180"/>
    </location>
    <ligand>
        <name>FMN</name>
        <dbReference type="ChEBI" id="CHEBI:58210"/>
    </ligand>
</feature>
<feature type="binding site" evidence="1">
    <location>
        <position position="180"/>
    </location>
    <ligand>
        <name>substrate</name>
    </ligand>
</feature>
<feature type="binding site" evidence="1">
    <location>
        <position position="185"/>
    </location>
    <ligand>
        <name>substrate</name>
    </ligand>
</feature>
<feature type="binding site" evidence="1">
    <location>
        <position position="225"/>
    </location>
    <ligand>
        <name>FMN</name>
        <dbReference type="ChEBI" id="CHEBI:58210"/>
    </ligand>
</feature>
<feature type="binding site" evidence="1">
    <location>
        <position position="253"/>
    </location>
    <ligand>
        <name>FMN</name>
        <dbReference type="ChEBI" id="CHEBI:58210"/>
    </ligand>
</feature>
<feature type="binding site" evidence="1">
    <location>
        <begin position="254"/>
        <end position="255"/>
    </location>
    <ligand>
        <name>substrate</name>
    </ligand>
</feature>
<feature type="binding site" evidence="1">
    <location>
        <position position="276"/>
    </location>
    <ligand>
        <name>FMN</name>
        <dbReference type="ChEBI" id="CHEBI:58210"/>
    </ligand>
</feature>
<feature type="binding site" evidence="1">
    <location>
        <position position="305"/>
    </location>
    <ligand>
        <name>FMN</name>
        <dbReference type="ChEBI" id="CHEBI:58210"/>
    </ligand>
</feature>
<feature type="binding site" evidence="1">
    <location>
        <begin position="326"/>
        <end position="327"/>
    </location>
    <ligand>
        <name>FMN</name>
        <dbReference type="ChEBI" id="CHEBI:58210"/>
    </ligand>
</feature>
<proteinExistence type="inferred from homology"/>
<organism>
    <name type="scientific">Bordetella pertussis (strain Tohama I / ATCC BAA-589 / NCTC 13251)</name>
    <dbReference type="NCBI Taxonomy" id="257313"/>
    <lineage>
        <taxon>Bacteria</taxon>
        <taxon>Pseudomonadati</taxon>
        <taxon>Pseudomonadota</taxon>
        <taxon>Betaproteobacteria</taxon>
        <taxon>Burkholderiales</taxon>
        <taxon>Alcaligenaceae</taxon>
        <taxon>Bordetella</taxon>
    </lineage>
</organism>
<accession>Q7VTR9</accession>
<sequence length="349" mass="37116">MSILFHAYPLARPALFAMDAETAHEVTLAQLQRAYDCGLTRKLLHAQPEAPATLMGLSLRNPVGLAAGLDKNGAHIDALGNLGFGFVEVGTVTPRAQPGNPKPRMFRLPRANALINRLGFNNQGLDAFIANVQRSQWRSQGRILGLNIGKNADTPIERAAEDYLIGLAGVYPHADYVTVNISSPNTKNLRALQGGDELSALLGQLQERRLALADQHQRHVPLAVKIAPDLSDDQIDAIAEILPRHGIDGVIATNTTLARDAVQGLPHAEEAGGVSGAPVHELSLRVIERLRSRLGDAVAIIGVGGILSGRQASEKMAAGAQAVQLYTGLIYRGPALVGECVRALAQGSR</sequence>
<dbReference type="EC" id="1.3.5.2" evidence="1"/>
<dbReference type="EMBL" id="BX640421">
    <property type="protein sequence ID" value="CAE43705.1"/>
    <property type="molecule type" value="Genomic_DNA"/>
</dbReference>
<dbReference type="RefSeq" id="NP_881968.1">
    <property type="nucleotide sequence ID" value="NC_002929.2"/>
</dbReference>
<dbReference type="RefSeq" id="WP_010931480.1">
    <property type="nucleotide sequence ID" value="NZ_CP039022.1"/>
</dbReference>
<dbReference type="SMR" id="Q7VTR9"/>
<dbReference type="STRING" id="257313.BP3442"/>
<dbReference type="PaxDb" id="257313-BP3442"/>
<dbReference type="KEGG" id="bpe:BP3442"/>
<dbReference type="PATRIC" id="fig|257313.5.peg.3727"/>
<dbReference type="eggNOG" id="COG0167">
    <property type="taxonomic scope" value="Bacteria"/>
</dbReference>
<dbReference type="HOGENOM" id="CLU_013640_2_0_4"/>
<dbReference type="UniPathway" id="UPA00070">
    <property type="reaction ID" value="UER00946"/>
</dbReference>
<dbReference type="Proteomes" id="UP000002676">
    <property type="component" value="Chromosome"/>
</dbReference>
<dbReference type="GO" id="GO:0005737">
    <property type="term" value="C:cytoplasm"/>
    <property type="evidence" value="ECO:0007669"/>
    <property type="project" value="InterPro"/>
</dbReference>
<dbReference type="GO" id="GO:0005886">
    <property type="term" value="C:plasma membrane"/>
    <property type="evidence" value="ECO:0007669"/>
    <property type="project" value="UniProtKB-SubCell"/>
</dbReference>
<dbReference type="GO" id="GO:0106430">
    <property type="term" value="F:dihydroorotate dehydrogenase (quinone) activity"/>
    <property type="evidence" value="ECO:0007669"/>
    <property type="project" value="UniProtKB-EC"/>
</dbReference>
<dbReference type="GO" id="GO:0006207">
    <property type="term" value="P:'de novo' pyrimidine nucleobase biosynthetic process"/>
    <property type="evidence" value="ECO:0007669"/>
    <property type="project" value="InterPro"/>
</dbReference>
<dbReference type="GO" id="GO:0044205">
    <property type="term" value="P:'de novo' UMP biosynthetic process"/>
    <property type="evidence" value="ECO:0007669"/>
    <property type="project" value="UniProtKB-UniRule"/>
</dbReference>
<dbReference type="CDD" id="cd04738">
    <property type="entry name" value="DHOD_2_like"/>
    <property type="match status" value="1"/>
</dbReference>
<dbReference type="Gene3D" id="3.20.20.70">
    <property type="entry name" value="Aldolase class I"/>
    <property type="match status" value="1"/>
</dbReference>
<dbReference type="HAMAP" id="MF_00225">
    <property type="entry name" value="DHO_dh_type2"/>
    <property type="match status" value="1"/>
</dbReference>
<dbReference type="InterPro" id="IPR013785">
    <property type="entry name" value="Aldolase_TIM"/>
</dbReference>
<dbReference type="InterPro" id="IPR050074">
    <property type="entry name" value="DHO_dehydrogenase"/>
</dbReference>
<dbReference type="InterPro" id="IPR012135">
    <property type="entry name" value="Dihydroorotate_DH_1_2"/>
</dbReference>
<dbReference type="InterPro" id="IPR005719">
    <property type="entry name" value="Dihydroorotate_DH_2"/>
</dbReference>
<dbReference type="InterPro" id="IPR005720">
    <property type="entry name" value="Dihydroorotate_DH_cat"/>
</dbReference>
<dbReference type="InterPro" id="IPR001295">
    <property type="entry name" value="Dihydroorotate_DH_CS"/>
</dbReference>
<dbReference type="NCBIfam" id="NF003644">
    <property type="entry name" value="PRK05286.1-1"/>
    <property type="match status" value="1"/>
</dbReference>
<dbReference type="NCBIfam" id="NF003645">
    <property type="entry name" value="PRK05286.1-2"/>
    <property type="match status" value="1"/>
</dbReference>
<dbReference type="NCBIfam" id="NF003646">
    <property type="entry name" value="PRK05286.1-4"/>
    <property type="match status" value="1"/>
</dbReference>
<dbReference type="NCBIfam" id="NF003652">
    <property type="entry name" value="PRK05286.2-5"/>
    <property type="match status" value="1"/>
</dbReference>
<dbReference type="NCBIfam" id="TIGR01036">
    <property type="entry name" value="pyrD_sub2"/>
    <property type="match status" value="1"/>
</dbReference>
<dbReference type="PANTHER" id="PTHR48109:SF4">
    <property type="entry name" value="DIHYDROOROTATE DEHYDROGENASE (QUINONE), MITOCHONDRIAL"/>
    <property type="match status" value="1"/>
</dbReference>
<dbReference type="PANTHER" id="PTHR48109">
    <property type="entry name" value="DIHYDROOROTATE DEHYDROGENASE (QUINONE), MITOCHONDRIAL-RELATED"/>
    <property type="match status" value="1"/>
</dbReference>
<dbReference type="Pfam" id="PF01180">
    <property type="entry name" value="DHO_dh"/>
    <property type="match status" value="1"/>
</dbReference>
<dbReference type="PIRSF" id="PIRSF000164">
    <property type="entry name" value="DHO_oxidase"/>
    <property type="match status" value="1"/>
</dbReference>
<dbReference type="SUPFAM" id="SSF51395">
    <property type="entry name" value="FMN-linked oxidoreductases"/>
    <property type="match status" value="1"/>
</dbReference>
<dbReference type="PROSITE" id="PS00911">
    <property type="entry name" value="DHODEHASE_1"/>
    <property type="match status" value="1"/>
</dbReference>
<dbReference type="PROSITE" id="PS00912">
    <property type="entry name" value="DHODEHASE_2"/>
    <property type="match status" value="1"/>
</dbReference>
<gene>
    <name evidence="1" type="primary">pyrD</name>
    <name type="ordered locus">BP3442</name>
</gene>
<evidence type="ECO:0000255" key="1">
    <source>
        <dbReference type="HAMAP-Rule" id="MF_00225"/>
    </source>
</evidence>
<name>PYRD_BORPE</name>
<keyword id="KW-1003">Cell membrane</keyword>
<keyword id="KW-0285">Flavoprotein</keyword>
<keyword id="KW-0288">FMN</keyword>
<keyword id="KW-0472">Membrane</keyword>
<keyword id="KW-0560">Oxidoreductase</keyword>
<keyword id="KW-0665">Pyrimidine biosynthesis</keyword>
<keyword id="KW-1185">Reference proteome</keyword>
<reference key="1">
    <citation type="journal article" date="2003" name="Nat. Genet.">
        <title>Comparative analysis of the genome sequences of Bordetella pertussis, Bordetella parapertussis and Bordetella bronchiseptica.</title>
        <authorList>
            <person name="Parkhill J."/>
            <person name="Sebaihia M."/>
            <person name="Preston A."/>
            <person name="Murphy L.D."/>
            <person name="Thomson N.R."/>
            <person name="Harris D.E."/>
            <person name="Holden M.T.G."/>
            <person name="Churcher C.M."/>
            <person name="Bentley S.D."/>
            <person name="Mungall K.L."/>
            <person name="Cerdeno-Tarraga A.-M."/>
            <person name="Temple L."/>
            <person name="James K.D."/>
            <person name="Harris B."/>
            <person name="Quail M.A."/>
            <person name="Achtman M."/>
            <person name="Atkin R."/>
            <person name="Baker S."/>
            <person name="Basham D."/>
            <person name="Bason N."/>
            <person name="Cherevach I."/>
            <person name="Chillingworth T."/>
            <person name="Collins M."/>
            <person name="Cronin A."/>
            <person name="Davis P."/>
            <person name="Doggett J."/>
            <person name="Feltwell T."/>
            <person name="Goble A."/>
            <person name="Hamlin N."/>
            <person name="Hauser H."/>
            <person name="Holroyd S."/>
            <person name="Jagels K."/>
            <person name="Leather S."/>
            <person name="Moule S."/>
            <person name="Norberczak H."/>
            <person name="O'Neil S."/>
            <person name="Ormond D."/>
            <person name="Price C."/>
            <person name="Rabbinowitsch E."/>
            <person name="Rutter S."/>
            <person name="Sanders M."/>
            <person name="Saunders D."/>
            <person name="Seeger K."/>
            <person name="Sharp S."/>
            <person name="Simmonds M."/>
            <person name="Skelton J."/>
            <person name="Squares R."/>
            <person name="Squares S."/>
            <person name="Stevens K."/>
            <person name="Unwin L."/>
            <person name="Whitehead S."/>
            <person name="Barrell B.G."/>
            <person name="Maskell D.J."/>
        </authorList>
    </citation>
    <scope>NUCLEOTIDE SEQUENCE [LARGE SCALE GENOMIC DNA]</scope>
    <source>
        <strain>Tohama I / ATCC BAA-589 / NCTC 13251</strain>
    </source>
</reference>
<protein>
    <recommendedName>
        <fullName evidence="1">Dihydroorotate dehydrogenase (quinone)</fullName>
        <ecNumber evidence="1">1.3.5.2</ecNumber>
    </recommendedName>
    <alternativeName>
        <fullName evidence="1">DHOdehase</fullName>
        <shortName evidence="1">DHOD</shortName>
        <shortName evidence="1">DHODase</shortName>
    </alternativeName>
    <alternativeName>
        <fullName evidence="1">Dihydroorotate oxidase</fullName>
    </alternativeName>
</protein>